<reference key="1">
    <citation type="journal article" date="2005" name="Nucleic Acids Res.">
        <title>Genome dynamics and diversity of Shigella species, the etiologic agents of bacillary dysentery.</title>
        <authorList>
            <person name="Yang F."/>
            <person name="Yang J."/>
            <person name="Zhang X."/>
            <person name="Chen L."/>
            <person name="Jiang Y."/>
            <person name="Yan Y."/>
            <person name="Tang X."/>
            <person name="Wang J."/>
            <person name="Xiong Z."/>
            <person name="Dong J."/>
            <person name="Xue Y."/>
            <person name="Zhu Y."/>
            <person name="Xu X."/>
            <person name="Sun L."/>
            <person name="Chen S."/>
            <person name="Nie H."/>
            <person name="Peng J."/>
            <person name="Xu J."/>
            <person name="Wang Y."/>
            <person name="Yuan Z."/>
            <person name="Wen Y."/>
            <person name="Yao Z."/>
            <person name="Shen Y."/>
            <person name="Qiang B."/>
            <person name="Hou Y."/>
            <person name="Yu J."/>
            <person name="Jin Q."/>
        </authorList>
    </citation>
    <scope>NUCLEOTIDE SEQUENCE [LARGE SCALE GENOMIC DNA]</scope>
    <source>
        <strain>Ss046</strain>
    </source>
</reference>
<gene>
    <name evidence="1" type="primary">pepE</name>
    <name type="ordered locus">SSON_4192</name>
</gene>
<accession>Q3YUW9</accession>
<name>PEPE_SHISS</name>
<protein>
    <recommendedName>
        <fullName evidence="1">Peptidase E</fullName>
        <ecNumber evidence="1">3.4.13.21</ecNumber>
    </recommendedName>
    <alternativeName>
        <fullName evidence="1">Alpha-aspartyl dipeptidase</fullName>
    </alternativeName>
    <alternativeName>
        <fullName evidence="1">Asp-specific dipeptidase</fullName>
    </alternativeName>
    <alternativeName>
        <fullName evidence="1">Dipeptidase E</fullName>
    </alternativeName>
</protein>
<dbReference type="EC" id="3.4.13.21" evidence="1"/>
<dbReference type="EMBL" id="CP000038">
    <property type="protein sequence ID" value="AAZ90693.1"/>
    <property type="molecule type" value="Genomic_DNA"/>
</dbReference>
<dbReference type="RefSeq" id="WP_000421748.1">
    <property type="nucleotide sequence ID" value="NC_007384.1"/>
</dbReference>
<dbReference type="SMR" id="Q3YUW9"/>
<dbReference type="MEROPS" id="S51.001"/>
<dbReference type="KEGG" id="ssn:SSON_4192"/>
<dbReference type="HOGENOM" id="CLU_071689_0_0_6"/>
<dbReference type="Proteomes" id="UP000002529">
    <property type="component" value="Chromosome"/>
</dbReference>
<dbReference type="GO" id="GO:0005737">
    <property type="term" value="C:cytoplasm"/>
    <property type="evidence" value="ECO:0007669"/>
    <property type="project" value="UniProtKB-SubCell"/>
</dbReference>
<dbReference type="GO" id="GO:0016805">
    <property type="term" value="F:dipeptidase activity"/>
    <property type="evidence" value="ECO:0007669"/>
    <property type="project" value="UniProtKB-UniRule"/>
</dbReference>
<dbReference type="GO" id="GO:0008236">
    <property type="term" value="F:serine-type peptidase activity"/>
    <property type="evidence" value="ECO:0007669"/>
    <property type="project" value="UniProtKB-KW"/>
</dbReference>
<dbReference type="GO" id="GO:0006508">
    <property type="term" value="P:proteolysis"/>
    <property type="evidence" value="ECO:0007669"/>
    <property type="project" value="UniProtKB-UniRule"/>
</dbReference>
<dbReference type="CDD" id="cd03146">
    <property type="entry name" value="GAT1_Peptidase_E"/>
    <property type="match status" value="1"/>
</dbReference>
<dbReference type="FunFam" id="3.40.50.880:FF:000007">
    <property type="entry name" value="Peptidase E"/>
    <property type="match status" value="1"/>
</dbReference>
<dbReference type="Gene3D" id="3.40.50.880">
    <property type="match status" value="1"/>
</dbReference>
<dbReference type="HAMAP" id="MF_00510">
    <property type="entry name" value="Peptidase_E"/>
    <property type="match status" value="1"/>
</dbReference>
<dbReference type="InterPro" id="IPR029062">
    <property type="entry name" value="Class_I_gatase-like"/>
</dbReference>
<dbReference type="InterPro" id="IPR005320">
    <property type="entry name" value="Peptidase_S51"/>
</dbReference>
<dbReference type="InterPro" id="IPR023172">
    <property type="entry name" value="Peptidase_S51_dipeptidase-E"/>
</dbReference>
<dbReference type="NCBIfam" id="NF003642">
    <property type="entry name" value="PRK05282.1"/>
    <property type="match status" value="1"/>
</dbReference>
<dbReference type="PANTHER" id="PTHR20842:SF0">
    <property type="entry name" value="ALPHA-ASPARTYL DIPEPTIDASE"/>
    <property type="match status" value="1"/>
</dbReference>
<dbReference type="PANTHER" id="PTHR20842">
    <property type="entry name" value="PROTEASE S51 ALPHA-ASPARTYL DIPEPTIDASE"/>
    <property type="match status" value="1"/>
</dbReference>
<dbReference type="Pfam" id="PF03575">
    <property type="entry name" value="Peptidase_S51"/>
    <property type="match status" value="1"/>
</dbReference>
<dbReference type="SUPFAM" id="SSF52317">
    <property type="entry name" value="Class I glutamine amidotransferase-like"/>
    <property type="match status" value="1"/>
</dbReference>
<feature type="chain" id="PRO_0000258598" description="Peptidase E">
    <location>
        <begin position="1"/>
        <end position="229"/>
    </location>
</feature>
<feature type="active site" description="Charge relay system" evidence="1">
    <location>
        <position position="120"/>
    </location>
</feature>
<feature type="active site" description="Charge relay system" evidence="1">
    <location>
        <position position="135"/>
    </location>
</feature>
<feature type="active site" description="Charge relay system" evidence="1">
    <location>
        <position position="157"/>
    </location>
</feature>
<evidence type="ECO:0000255" key="1">
    <source>
        <dbReference type="HAMAP-Rule" id="MF_00510"/>
    </source>
</evidence>
<sequence length="229" mass="24487">MELLLLSNSTLPGKAWLEHALPLIAEQLQGRRSAVFIPFAGVTQTCDDYTAKTAAVLAPLGVSVTGIHSVVDPVAAIENAEIVIVGGGNTFQLLKQCRERGLLAPITDVVKRGALYIGWSAGANLACPTIRTTNDMPIVDPQGFDALNLFPLQINPHFTNALPEGHKGETREQRIRELLVVAPELTIIGLPEGNWITVSKGHATLGGPNTTYVFKAGEEAVPLEAGHRF</sequence>
<keyword id="KW-0963">Cytoplasm</keyword>
<keyword id="KW-0224">Dipeptidase</keyword>
<keyword id="KW-0378">Hydrolase</keyword>
<keyword id="KW-0645">Protease</keyword>
<keyword id="KW-1185">Reference proteome</keyword>
<keyword id="KW-0720">Serine protease</keyword>
<proteinExistence type="inferred from homology"/>
<organism>
    <name type="scientific">Shigella sonnei (strain Ss046)</name>
    <dbReference type="NCBI Taxonomy" id="300269"/>
    <lineage>
        <taxon>Bacteria</taxon>
        <taxon>Pseudomonadati</taxon>
        <taxon>Pseudomonadota</taxon>
        <taxon>Gammaproteobacteria</taxon>
        <taxon>Enterobacterales</taxon>
        <taxon>Enterobacteriaceae</taxon>
        <taxon>Shigella</taxon>
    </lineage>
</organism>
<comment type="function">
    <text evidence="1">Hydrolyzes dipeptides containing N-terminal aspartate residues. May play a role in allowing the cell to use peptide aspartate to spare carbon otherwise required for the synthesis of the aspartate family of amino acids.</text>
</comment>
<comment type="catalytic activity">
    <reaction evidence="1">
        <text>Dipeptidase E catalyzes the hydrolysis of dipeptides Asp-|-Xaa. It does not act on peptides with N-terminal Glu, Asn or Gln, nor does it cleave isoaspartyl peptides.</text>
        <dbReference type="EC" id="3.4.13.21"/>
    </reaction>
</comment>
<comment type="subcellular location">
    <subcellularLocation>
        <location evidence="1">Cytoplasm</location>
    </subcellularLocation>
</comment>
<comment type="similarity">
    <text evidence="1">Belongs to the peptidase S51 family.</text>
</comment>